<dbReference type="EMBL" id="AY509002">
    <property type="protein sequence ID" value="AAR92468.1"/>
    <property type="molecule type" value="mRNA"/>
</dbReference>
<dbReference type="EMBL" id="AK052950">
    <property type="protein sequence ID" value="BAC35217.1"/>
    <property type="molecule type" value="mRNA"/>
</dbReference>
<dbReference type="CCDS" id="CCDS51652.1"/>
<dbReference type="RefSeq" id="NP_780493.1">
    <property type="nucleotide sequence ID" value="NM_175284.3"/>
</dbReference>
<dbReference type="SMR" id="Q8BKG4"/>
<dbReference type="BioGRID" id="220362">
    <property type="interactions" value="2"/>
</dbReference>
<dbReference type="FunCoup" id="Q8BKG4">
    <property type="interactions" value="770"/>
</dbReference>
<dbReference type="STRING" id="10090.ENSMUSP00000114114"/>
<dbReference type="GlyCosmos" id="Q8BKG4">
    <property type="glycosylation" value="3 sites, No reported glycans"/>
</dbReference>
<dbReference type="GlyGen" id="Q8BKG4">
    <property type="glycosylation" value="3 sites"/>
</dbReference>
<dbReference type="PhosphoSitePlus" id="Q8BKG4"/>
<dbReference type="PaxDb" id="10090-ENSMUSP00000114114"/>
<dbReference type="ProteomicsDB" id="271655"/>
<dbReference type="Antibodypedia" id="2928">
    <property type="antibodies" value="269 antibodies from 34 providers"/>
</dbReference>
<dbReference type="DNASU" id="93897"/>
<dbReference type="Ensembl" id="ENSMUST00000117102.4">
    <property type="protein sequence ID" value="ENSMUSP00000114114.3"/>
    <property type="gene ID" value="ENSMUSG00000081683.6"/>
</dbReference>
<dbReference type="GeneID" id="93897"/>
<dbReference type="KEGG" id="mmu:93897"/>
<dbReference type="UCSC" id="uc008zsh.1">
    <property type="organism name" value="mouse"/>
</dbReference>
<dbReference type="AGR" id="MGI:2136761"/>
<dbReference type="CTD" id="11211"/>
<dbReference type="MGI" id="MGI:2136761">
    <property type="gene designation" value="Fzd10"/>
</dbReference>
<dbReference type="VEuPathDB" id="HostDB:ENSMUSG00000081683"/>
<dbReference type="eggNOG" id="KOG3577">
    <property type="taxonomic scope" value="Eukaryota"/>
</dbReference>
<dbReference type="GeneTree" id="ENSGT00940000161861"/>
<dbReference type="HOGENOM" id="CLU_007873_2_1_1"/>
<dbReference type="InParanoid" id="Q8BKG4"/>
<dbReference type="OMA" id="WSILCFF"/>
<dbReference type="OrthoDB" id="5959102at2759"/>
<dbReference type="PhylomeDB" id="Q8BKG4"/>
<dbReference type="TreeFam" id="TF317907"/>
<dbReference type="BioGRID-ORCS" id="93897">
    <property type="hits" value="1 hit in 77 CRISPR screens"/>
</dbReference>
<dbReference type="ChiTaRS" id="Fzd2">
    <property type="organism name" value="mouse"/>
</dbReference>
<dbReference type="PRO" id="PR:Q8BKG4"/>
<dbReference type="Proteomes" id="UP000000589">
    <property type="component" value="Chromosome 5"/>
</dbReference>
<dbReference type="RNAct" id="Q8BKG4">
    <property type="molecule type" value="protein"/>
</dbReference>
<dbReference type="Bgee" id="ENSMUSG00000081683">
    <property type="expression patterns" value="Expressed in manus and 144 other cell types or tissues"/>
</dbReference>
<dbReference type="ExpressionAtlas" id="Q8BKG4">
    <property type="expression patterns" value="baseline and differential"/>
</dbReference>
<dbReference type="GO" id="GO:0009986">
    <property type="term" value="C:cell surface"/>
    <property type="evidence" value="ECO:0007669"/>
    <property type="project" value="Ensembl"/>
</dbReference>
<dbReference type="GO" id="GO:0005737">
    <property type="term" value="C:cytoplasm"/>
    <property type="evidence" value="ECO:0007669"/>
    <property type="project" value="Ensembl"/>
</dbReference>
<dbReference type="GO" id="GO:0005654">
    <property type="term" value="C:nucleoplasm"/>
    <property type="evidence" value="ECO:0007669"/>
    <property type="project" value="Ensembl"/>
</dbReference>
<dbReference type="GO" id="GO:0005886">
    <property type="term" value="C:plasma membrane"/>
    <property type="evidence" value="ECO:0007669"/>
    <property type="project" value="UniProtKB-SubCell"/>
</dbReference>
<dbReference type="GO" id="GO:0004930">
    <property type="term" value="F:G protein-coupled receptor activity"/>
    <property type="evidence" value="ECO:0007669"/>
    <property type="project" value="UniProtKB-KW"/>
</dbReference>
<dbReference type="GO" id="GO:0042813">
    <property type="term" value="F:Wnt receptor activity"/>
    <property type="evidence" value="ECO:0007669"/>
    <property type="project" value="Ensembl"/>
</dbReference>
<dbReference type="GO" id="GO:0017147">
    <property type="term" value="F:Wnt-protein binding"/>
    <property type="evidence" value="ECO:0000353"/>
    <property type="project" value="MGI"/>
</dbReference>
<dbReference type="GO" id="GO:0060070">
    <property type="term" value="P:canonical Wnt signaling pathway"/>
    <property type="evidence" value="ECO:0007669"/>
    <property type="project" value="Ensembl"/>
</dbReference>
<dbReference type="GO" id="GO:0035567">
    <property type="term" value="P:non-canonical Wnt signaling pathway"/>
    <property type="evidence" value="ECO:0007669"/>
    <property type="project" value="Ensembl"/>
</dbReference>
<dbReference type="GO" id="GO:0046330">
    <property type="term" value="P:positive regulation of JNK cascade"/>
    <property type="evidence" value="ECO:0007669"/>
    <property type="project" value="Ensembl"/>
</dbReference>
<dbReference type="GO" id="GO:0032956">
    <property type="term" value="P:regulation of actin cytoskeleton organization"/>
    <property type="evidence" value="ECO:0007669"/>
    <property type="project" value="Ensembl"/>
</dbReference>
<dbReference type="GO" id="GO:0016055">
    <property type="term" value="P:Wnt signaling pathway"/>
    <property type="evidence" value="ECO:0000316"/>
    <property type="project" value="MGI"/>
</dbReference>
<dbReference type="CDD" id="cd15037">
    <property type="entry name" value="7tmF_FZD10"/>
    <property type="match status" value="1"/>
</dbReference>
<dbReference type="FunFam" id="1.10.2000.10:FF:000007">
    <property type="entry name" value="Frizzled class receptor 10"/>
    <property type="match status" value="1"/>
</dbReference>
<dbReference type="FunFam" id="1.20.1070.10:FF:000020">
    <property type="entry name" value="Frizzled class receptor 10"/>
    <property type="match status" value="1"/>
</dbReference>
<dbReference type="Gene3D" id="1.10.2000.10">
    <property type="entry name" value="Frizzled cysteine-rich domain"/>
    <property type="match status" value="1"/>
</dbReference>
<dbReference type="Gene3D" id="1.20.1070.10">
    <property type="entry name" value="Rhodopsin 7-helix transmembrane proteins"/>
    <property type="match status" value="1"/>
</dbReference>
<dbReference type="InterPro" id="IPR015526">
    <property type="entry name" value="Frizzled/SFRP"/>
</dbReference>
<dbReference type="InterPro" id="IPR000539">
    <property type="entry name" value="Frizzled/Smoothened_7TM"/>
</dbReference>
<dbReference type="InterPro" id="IPR020067">
    <property type="entry name" value="Frizzled_dom"/>
</dbReference>
<dbReference type="InterPro" id="IPR036790">
    <property type="entry name" value="Frizzled_dom_sf"/>
</dbReference>
<dbReference type="InterPro" id="IPR017981">
    <property type="entry name" value="GPCR_2-like_7TM"/>
</dbReference>
<dbReference type="PANTHER" id="PTHR11309">
    <property type="entry name" value="FRIZZLED"/>
    <property type="match status" value="1"/>
</dbReference>
<dbReference type="PANTHER" id="PTHR11309:SF86">
    <property type="entry name" value="FRIZZLED-10"/>
    <property type="match status" value="1"/>
</dbReference>
<dbReference type="Pfam" id="PF01534">
    <property type="entry name" value="Frizzled"/>
    <property type="match status" value="1"/>
</dbReference>
<dbReference type="Pfam" id="PF01392">
    <property type="entry name" value="Fz"/>
    <property type="match status" value="1"/>
</dbReference>
<dbReference type="PRINTS" id="PR00489">
    <property type="entry name" value="FRIZZLED"/>
</dbReference>
<dbReference type="SMART" id="SM00063">
    <property type="entry name" value="FRI"/>
    <property type="match status" value="1"/>
</dbReference>
<dbReference type="SMART" id="SM01330">
    <property type="entry name" value="Frizzled"/>
    <property type="match status" value="1"/>
</dbReference>
<dbReference type="SUPFAM" id="SSF63501">
    <property type="entry name" value="Frizzled cysteine-rich domain"/>
    <property type="match status" value="1"/>
</dbReference>
<dbReference type="PROSITE" id="PS50038">
    <property type="entry name" value="FZ"/>
    <property type="match status" value="1"/>
</dbReference>
<dbReference type="PROSITE" id="PS50261">
    <property type="entry name" value="G_PROTEIN_RECEP_F2_4"/>
    <property type="match status" value="1"/>
</dbReference>
<organism>
    <name type="scientific">Mus musculus</name>
    <name type="common">Mouse</name>
    <dbReference type="NCBI Taxonomy" id="10090"/>
    <lineage>
        <taxon>Eukaryota</taxon>
        <taxon>Metazoa</taxon>
        <taxon>Chordata</taxon>
        <taxon>Craniata</taxon>
        <taxon>Vertebrata</taxon>
        <taxon>Euteleostomi</taxon>
        <taxon>Mammalia</taxon>
        <taxon>Eutheria</taxon>
        <taxon>Euarchontoglires</taxon>
        <taxon>Glires</taxon>
        <taxon>Rodentia</taxon>
        <taxon>Myomorpha</taxon>
        <taxon>Muroidea</taxon>
        <taxon>Muridae</taxon>
        <taxon>Murinae</taxon>
        <taxon>Mus</taxon>
        <taxon>Mus</taxon>
    </lineage>
</organism>
<name>FZD10_MOUSE</name>
<protein>
    <recommendedName>
        <fullName>Frizzled-10</fullName>
        <shortName>Fz-10</shortName>
    </recommendedName>
    <cdAntigenName>CD350</cdAntigenName>
</protein>
<feature type="signal peptide" evidence="3">
    <location>
        <begin position="1"/>
        <end position="21"/>
    </location>
</feature>
<feature type="chain" id="PRO_0000013006" description="Frizzled-10">
    <location>
        <begin position="22"/>
        <end position="582"/>
    </location>
</feature>
<feature type="topological domain" description="Extracellular" evidence="3">
    <location>
        <begin position="22"/>
        <end position="226"/>
    </location>
</feature>
<feature type="transmembrane region" description="Helical; Name=1" evidence="3">
    <location>
        <begin position="227"/>
        <end position="247"/>
    </location>
</feature>
<feature type="topological domain" description="Cytoplasmic" evidence="3">
    <location>
        <begin position="248"/>
        <end position="263"/>
    </location>
</feature>
<feature type="transmembrane region" description="Helical; Name=2" evidence="3">
    <location>
        <begin position="264"/>
        <end position="284"/>
    </location>
</feature>
<feature type="topological domain" description="Extracellular" evidence="3">
    <location>
        <begin position="285"/>
        <end position="312"/>
    </location>
</feature>
<feature type="transmembrane region" description="Helical; Name=3" evidence="3">
    <location>
        <begin position="313"/>
        <end position="333"/>
    </location>
</feature>
<feature type="topological domain" description="Cytoplasmic" evidence="3">
    <location>
        <begin position="334"/>
        <end position="352"/>
    </location>
</feature>
<feature type="transmembrane region" description="Helical; Name=4" evidence="3">
    <location>
        <begin position="353"/>
        <end position="373"/>
    </location>
</feature>
<feature type="topological domain" description="Extracellular" evidence="3">
    <location>
        <begin position="374"/>
        <end position="394"/>
    </location>
</feature>
<feature type="transmembrane region" description="Helical; Name=5" evidence="3">
    <location>
        <begin position="395"/>
        <end position="415"/>
    </location>
</feature>
<feature type="topological domain" description="Cytoplasmic" evidence="3">
    <location>
        <begin position="416"/>
        <end position="444"/>
    </location>
</feature>
<feature type="transmembrane region" description="Helical; Name=6" evidence="3">
    <location>
        <begin position="445"/>
        <end position="465"/>
    </location>
</feature>
<feature type="topological domain" description="Extracellular" evidence="3">
    <location>
        <begin position="466"/>
        <end position="503"/>
    </location>
</feature>
<feature type="transmembrane region" description="Helical; Name=7" evidence="3">
    <location>
        <begin position="504"/>
        <end position="524"/>
    </location>
</feature>
<feature type="topological domain" description="Cytoplasmic" evidence="3">
    <location>
        <begin position="525"/>
        <end position="582"/>
    </location>
</feature>
<feature type="domain" description="FZ" evidence="4">
    <location>
        <begin position="30"/>
        <end position="151"/>
    </location>
</feature>
<feature type="region of interest" description="Disordered" evidence="5">
    <location>
        <begin position="153"/>
        <end position="189"/>
    </location>
</feature>
<feature type="region of interest" description="Disordered" evidence="5">
    <location>
        <begin position="561"/>
        <end position="582"/>
    </location>
</feature>
<feature type="short sequence motif" description="Lys-Thr-X-X-X-Trp motif, mediates interaction with the PDZ domain of Dvl family members" evidence="1">
    <location>
        <begin position="527"/>
        <end position="532"/>
    </location>
</feature>
<feature type="short sequence motif" description="PDZ-binding">
    <location>
        <begin position="580"/>
        <end position="582"/>
    </location>
</feature>
<feature type="glycosylation site" description="N-linked (GlcNAc...) asparagine" evidence="3">
    <location>
        <position position="49"/>
    </location>
</feature>
<feature type="glycosylation site" description="N-linked (GlcNAc...) asparagine" evidence="3">
    <location>
        <position position="154"/>
    </location>
</feature>
<feature type="glycosylation site" description="N-linked (GlcNAc...) asparagine" evidence="3">
    <location>
        <position position="486"/>
    </location>
</feature>
<feature type="disulfide bond" evidence="4">
    <location>
        <begin position="35"/>
        <end position="96"/>
    </location>
</feature>
<feature type="disulfide bond" evidence="4">
    <location>
        <begin position="43"/>
        <end position="89"/>
    </location>
</feature>
<feature type="disulfide bond" evidence="4">
    <location>
        <begin position="80"/>
        <end position="118"/>
    </location>
</feature>
<feature type="disulfide bond" evidence="4">
    <location>
        <begin position="107"/>
        <end position="148"/>
    </location>
</feature>
<feature type="disulfide bond" evidence="4">
    <location>
        <begin position="111"/>
        <end position="135"/>
    </location>
</feature>
<accession>Q8BKG4</accession>
<gene>
    <name type="primary">Fzd10</name>
    <name type="synonym">Fz10</name>
</gene>
<sequence>MQHPGPRLWLVLQVMIGSCTAISSMDLERPGDGKCQPVEIPMCKDIGYNTTRMPNLMGHENQREAAIQLHEFAPLVEYGCHSHLRFFLCSLYAPMCTEQVSTPIPACRVMCEQARLKCSPIMEQFKFRWPDSLDCSKLPNKNDPNYLCMEAPNNGSDEPSRGSGMFPPLFRPQRPHSAQEHPLKDGGPGRAGCDNPGKFHHVEKSESCAPLCTPGVDVYWSRDDKRFAVVWLAIWSVLCFFSSAFTVLTFLIDPSRFRYPERPIIFLSMCYCVYSVGYIIRLFAGAESIACDRDSGQLYVIQEGLESTGCTLVFLVLYYFGMASSLWWVVLTLTWFLAAGKKWGHEAIEANSSYFHLAAWAIPAVKTILILVMRRVAGDELTGVCYVGSMDVNALTGFVLVPLACYLVIGTSFILSGFVALFHIRRVMKTGGENTDKLEKLMVRIGVFSLLYTVPATCVIACYFYERLNMDYWKMLATQHKCKMNNQTKTPDCLMTTSIPAVEVFMVKVSMLLVVGITSGVWVWTSKTLQSWQHVCSRGLKRKSRRKPASVVTSAGIYKKAQHPQKPHLGKYELPAQPSACV</sequence>
<keyword id="KW-1003">Cell membrane</keyword>
<keyword id="KW-0217">Developmental protein</keyword>
<keyword id="KW-1015">Disulfide bond</keyword>
<keyword id="KW-0297">G-protein coupled receptor</keyword>
<keyword id="KW-0325">Glycoprotein</keyword>
<keyword id="KW-0472">Membrane</keyword>
<keyword id="KW-0675">Receptor</keyword>
<keyword id="KW-1185">Reference proteome</keyword>
<keyword id="KW-0732">Signal</keyword>
<keyword id="KW-0807">Transducer</keyword>
<keyword id="KW-0812">Transmembrane</keyword>
<keyword id="KW-1133">Transmembrane helix</keyword>
<keyword id="KW-0832">Ubl conjugation</keyword>
<keyword id="KW-0879">Wnt signaling pathway</keyword>
<reference key="1">
    <citation type="journal article" date="2004" name="Dev. Genes Evol.">
        <title>Analysis of Fz10 expression in mouse embryos.</title>
        <authorList>
            <person name="Nunnally A.P."/>
            <person name="Parr B.A."/>
        </authorList>
    </citation>
    <scope>NUCLEOTIDE SEQUENCE [MRNA]</scope>
    <source>
        <strain>CD-1</strain>
    </source>
</reference>
<reference key="2">
    <citation type="journal article" date="2005" name="Science">
        <title>The transcriptional landscape of the mammalian genome.</title>
        <authorList>
            <person name="Carninci P."/>
            <person name="Kasukawa T."/>
            <person name="Katayama S."/>
            <person name="Gough J."/>
            <person name="Frith M.C."/>
            <person name="Maeda N."/>
            <person name="Oyama R."/>
            <person name="Ravasi T."/>
            <person name="Lenhard B."/>
            <person name="Wells C."/>
            <person name="Kodzius R."/>
            <person name="Shimokawa K."/>
            <person name="Bajic V.B."/>
            <person name="Brenner S.E."/>
            <person name="Batalov S."/>
            <person name="Forrest A.R."/>
            <person name="Zavolan M."/>
            <person name="Davis M.J."/>
            <person name="Wilming L.G."/>
            <person name="Aidinis V."/>
            <person name="Allen J.E."/>
            <person name="Ambesi-Impiombato A."/>
            <person name="Apweiler R."/>
            <person name="Aturaliya R.N."/>
            <person name="Bailey T.L."/>
            <person name="Bansal M."/>
            <person name="Baxter L."/>
            <person name="Beisel K.W."/>
            <person name="Bersano T."/>
            <person name="Bono H."/>
            <person name="Chalk A.M."/>
            <person name="Chiu K.P."/>
            <person name="Choudhary V."/>
            <person name="Christoffels A."/>
            <person name="Clutterbuck D.R."/>
            <person name="Crowe M.L."/>
            <person name="Dalla E."/>
            <person name="Dalrymple B.P."/>
            <person name="de Bono B."/>
            <person name="Della Gatta G."/>
            <person name="di Bernardo D."/>
            <person name="Down T."/>
            <person name="Engstrom P."/>
            <person name="Fagiolini M."/>
            <person name="Faulkner G."/>
            <person name="Fletcher C.F."/>
            <person name="Fukushima T."/>
            <person name="Furuno M."/>
            <person name="Futaki S."/>
            <person name="Gariboldi M."/>
            <person name="Georgii-Hemming P."/>
            <person name="Gingeras T.R."/>
            <person name="Gojobori T."/>
            <person name="Green R.E."/>
            <person name="Gustincich S."/>
            <person name="Harbers M."/>
            <person name="Hayashi Y."/>
            <person name="Hensch T.K."/>
            <person name="Hirokawa N."/>
            <person name="Hill D."/>
            <person name="Huminiecki L."/>
            <person name="Iacono M."/>
            <person name="Ikeo K."/>
            <person name="Iwama A."/>
            <person name="Ishikawa T."/>
            <person name="Jakt M."/>
            <person name="Kanapin A."/>
            <person name="Katoh M."/>
            <person name="Kawasawa Y."/>
            <person name="Kelso J."/>
            <person name="Kitamura H."/>
            <person name="Kitano H."/>
            <person name="Kollias G."/>
            <person name="Krishnan S.P."/>
            <person name="Kruger A."/>
            <person name="Kummerfeld S.K."/>
            <person name="Kurochkin I.V."/>
            <person name="Lareau L.F."/>
            <person name="Lazarevic D."/>
            <person name="Lipovich L."/>
            <person name="Liu J."/>
            <person name="Liuni S."/>
            <person name="McWilliam S."/>
            <person name="Madan Babu M."/>
            <person name="Madera M."/>
            <person name="Marchionni L."/>
            <person name="Matsuda H."/>
            <person name="Matsuzawa S."/>
            <person name="Miki H."/>
            <person name="Mignone F."/>
            <person name="Miyake S."/>
            <person name="Morris K."/>
            <person name="Mottagui-Tabar S."/>
            <person name="Mulder N."/>
            <person name="Nakano N."/>
            <person name="Nakauchi H."/>
            <person name="Ng P."/>
            <person name="Nilsson R."/>
            <person name="Nishiguchi S."/>
            <person name="Nishikawa S."/>
            <person name="Nori F."/>
            <person name="Ohara O."/>
            <person name="Okazaki Y."/>
            <person name="Orlando V."/>
            <person name="Pang K.C."/>
            <person name="Pavan W.J."/>
            <person name="Pavesi G."/>
            <person name="Pesole G."/>
            <person name="Petrovsky N."/>
            <person name="Piazza S."/>
            <person name="Reed J."/>
            <person name="Reid J.F."/>
            <person name="Ring B.Z."/>
            <person name="Ringwald M."/>
            <person name="Rost B."/>
            <person name="Ruan Y."/>
            <person name="Salzberg S.L."/>
            <person name="Sandelin A."/>
            <person name="Schneider C."/>
            <person name="Schoenbach C."/>
            <person name="Sekiguchi K."/>
            <person name="Semple C.A."/>
            <person name="Seno S."/>
            <person name="Sessa L."/>
            <person name="Sheng Y."/>
            <person name="Shibata Y."/>
            <person name="Shimada H."/>
            <person name="Shimada K."/>
            <person name="Silva D."/>
            <person name="Sinclair B."/>
            <person name="Sperling S."/>
            <person name="Stupka E."/>
            <person name="Sugiura K."/>
            <person name="Sultana R."/>
            <person name="Takenaka Y."/>
            <person name="Taki K."/>
            <person name="Tammoja K."/>
            <person name="Tan S.L."/>
            <person name="Tang S."/>
            <person name="Taylor M.S."/>
            <person name="Tegner J."/>
            <person name="Teichmann S.A."/>
            <person name="Ueda H.R."/>
            <person name="van Nimwegen E."/>
            <person name="Verardo R."/>
            <person name="Wei C.L."/>
            <person name="Yagi K."/>
            <person name="Yamanishi H."/>
            <person name="Zabarovsky E."/>
            <person name="Zhu S."/>
            <person name="Zimmer A."/>
            <person name="Hide W."/>
            <person name="Bult C."/>
            <person name="Grimmond S.M."/>
            <person name="Teasdale R.D."/>
            <person name="Liu E.T."/>
            <person name="Brusic V."/>
            <person name="Quackenbush J."/>
            <person name="Wahlestedt C."/>
            <person name="Mattick J.S."/>
            <person name="Hume D.A."/>
            <person name="Kai C."/>
            <person name="Sasaki D."/>
            <person name="Tomaru Y."/>
            <person name="Fukuda S."/>
            <person name="Kanamori-Katayama M."/>
            <person name="Suzuki M."/>
            <person name="Aoki J."/>
            <person name="Arakawa T."/>
            <person name="Iida J."/>
            <person name="Imamura K."/>
            <person name="Itoh M."/>
            <person name="Kato T."/>
            <person name="Kawaji H."/>
            <person name="Kawagashira N."/>
            <person name="Kawashima T."/>
            <person name="Kojima M."/>
            <person name="Kondo S."/>
            <person name="Konno H."/>
            <person name="Nakano K."/>
            <person name="Ninomiya N."/>
            <person name="Nishio T."/>
            <person name="Okada M."/>
            <person name="Plessy C."/>
            <person name="Shibata K."/>
            <person name="Shiraki T."/>
            <person name="Suzuki S."/>
            <person name="Tagami M."/>
            <person name="Waki K."/>
            <person name="Watahiki A."/>
            <person name="Okamura-Oho Y."/>
            <person name="Suzuki H."/>
            <person name="Kawai J."/>
            <person name="Hayashizaki Y."/>
        </authorList>
    </citation>
    <scope>NUCLEOTIDE SEQUENCE [LARGE SCALE MRNA]</scope>
    <source>
        <strain>C57BL/6J</strain>
        <tissue>Head</tissue>
    </source>
</reference>
<reference key="3">
    <citation type="journal article" date="2005" name="Mol. Cell. Biol.">
        <title>Wnt7b activates canonical signaling in epithelial and vascular smooth muscle cells through interactions with Fzd1, Fzd10, and LRP5.</title>
        <authorList>
            <person name="Wang Z."/>
            <person name="Shu W."/>
            <person name="Lu M.M."/>
            <person name="Morrisey E.E."/>
        </authorList>
    </citation>
    <scope>INTERACTION WITH WNT7B</scope>
    <scope>FUNCTION</scope>
    <scope>SUBCELLULAR LOCATION</scope>
</reference>
<proteinExistence type="evidence at protein level"/>
<evidence type="ECO:0000250" key="1"/>
<evidence type="ECO:0000250" key="2">
    <source>
        <dbReference type="UniProtKB" id="Q9ULW2"/>
    </source>
</evidence>
<evidence type="ECO:0000255" key="3"/>
<evidence type="ECO:0000255" key="4">
    <source>
        <dbReference type="PROSITE-ProRule" id="PRU00090"/>
    </source>
</evidence>
<evidence type="ECO:0000256" key="5">
    <source>
        <dbReference type="SAM" id="MobiDB-lite"/>
    </source>
</evidence>
<evidence type="ECO:0000269" key="6">
    <source>
    </source>
</evidence>
<evidence type="ECO:0000305" key="7"/>
<comment type="function">
    <text evidence="6">Receptor for Wnt proteins (PubMed:15923619). Functions in the canonical Wnt/beta-catenin signaling pathway (PubMed:15923619). The canonical Wnt/beta-catenin signaling pathway leads to the activation of disheveled proteins, inhibition of GSK-3 kinase, nuclear accumulation of beta-catenin and activation of Wnt target genes. A second signaling pathway involving PKC and calcium fluxes has been seen for some family members, but it is not yet clear if it represents a distinct pathway or if it can be integrated in the canonical pathway, as PKC seems to be required for Wnt-mediated inactivation of GSK-3 kinase. Both pathways seem to involve interactions with G-proteins. May be involved in transduction and intercellular transmission of polarity information during tissue morphogenesis and/or in differentiated tissues (Probable).</text>
</comment>
<comment type="subunit">
    <text evidence="2 6">Interacts with MYOC (By similarity). Interacts with WNT7B (PubMed:15923619).</text>
</comment>
<comment type="subcellular location">
    <subcellularLocation>
        <location evidence="6">Cell membrane</location>
        <topology evidence="3">Multi-pass membrane protein</topology>
    </subcellularLocation>
</comment>
<comment type="domain">
    <text evidence="1">Lys-Thr-X-X-X-Trp motif interacts with the PDZ domain of Dvl (Disheveled) family members and is involved in the activation of the Wnt/beta-catenin signaling pathway.</text>
</comment>
<comment type="domain">
    <text evidence="1">The FZ domain is involved in binding with Wnt ligands.</text>
</comment>
<comment type="PTM">
    <text evidence="1">Ubiquitinated by ZNRF3, leading to its degradation by the proteasome.</text>
</comment>
<comment type="similarity">
    <text evidence="7">Belongs to the G-protein coupled receptor Fz/Smo family.</text>
</comment>